<sequence length="251" mass="27716">MLAKRIIPCLDVREGRVVKGINFEDLRDAGSILEQARFYNNELADELVFLDISASLESRKTTLEEVLKVSEEVFIPLTVGGGISSVERARDAFLHGADKVSVNTAAVYDPKLITRIADQYGSQAVVVAIDVKKVGEKYIVHTHSGKELTKYEALEWARMVQELGAGEILLTSMDRDGTKAGYDNEILREISTSVHIPVIASGGAGNLEHLYDGFAKGCADAALAASIFHFRQYTIREAKEYLRERGIEVRL</sequence>
<accession>B3EKW7</accession>
<evidence type="ECO:0000255" key="1">
    <source>
        <dbReference type="HAMAP-Rule" id="MF_01013"/>
    </source>
</evidence>
<keyword id="KW-0028">Amino-acid biosynthesis</keyword>
<keyword id="KW-0963">Cytoplasm</keyword>
<keyword id="KW-0368">Histidine biosynthesis</keyword>
<keyword id="KW-0456">Lyase</keyword>
<protein>
    <recommendedName>
        <fullName evidence="1">Imidazole glycerol phosphate synthase subunit HisF</fullName>
        <ecNumber evidence="1">4.3.2.10</ecNumber>
    </recommendedName>
    <alternativeName>
        <fullName evidence="1">IGP synthase cyclase subunit</fullName>
    </alternativeName>
    <alternativeName>
        <fullName evidence="1">IGP synthase subunit HisF</fullName>
    </alternativeName>
    <alternativeName>
        <fullName evidence="1">ImGP synthase subunit HisF</fullName>
        <shortName evidence="1">IGPS subunit HisF</shortName>
    </alternativeName>
</protein>
<gene>
    <name evidence="1" type="primary">hisF</name>
    <name type="ordered locus">Cphamn1_1735</name>
</gene>
<dbReference type="EC" id="4.3.2.10" evidence="1"/>
<dbReference type="EMBL" id="CP001101">
    <property type="protein sequence ID" value="ACE04653.1"/>
    <property type="molecule type" value="Genomic_DNA"/>
</dbReference>
<dbReference type="SMR" id="B3EKW7"/>
<dbReference type="STRING" id="331678.Cphamn1_1735"/>
<dbReference type="KEGG" id="cpb:Cphamn1_1735"/>
<dbReference type="eggNOG" id="COG0107">
    <property type="taxonomic scope" value="Bacteria"/>
</dbReference>
<dbReference type="HOGENOM" id="CLU_048577_4_0_10"/>
<dbReference type="OrthoDB" id="9781903at2"/>
<dbReference type="UniPathway" id="UPA00031">
    <property type="reaction ID" value="UER00010"/>
</dbReference>
<dbReference type="GO" id="GO:0005737">
    <property type="term" value="C:cytoplasm"/>
    <property type="evidence" value="ECO:0007669"/>
    <property type="project" value="UniProtKB-SubCell"/>
</dbReference>
<dbReference type="GO" id="GO:0000107">
    <property type="term" value="F:imidazoleglycerol-phosphate synthase activity"/>
    <property type="evidence" value="ECO:0007669"/>
    <property type="project" value="UniProtKB-UniRule"/>
</dbReference>
<dbReference type="GO" id="GO:0016829">
    <property type="term" value="F:lyase activity"/>
    <property type="evidence" value="ECO:0007669"/>
    <property type="project" value="UniProtKB-KW"/>
</dbReference>
<dbReference type="GO" id="GO:0000105">
    <property type="term" value="P:L-histidine biosynthetic process"/>
    <property type="evidence" value="ECO:0007669"/>
    <property type="project" value="UniProtKB-UniRule"/>
</dbReference>
<dbReference type="CDD" id="cd04731">
    <property type="entry name" value="HisF"/>
    <property type="match status" value="1"/>
</dbReference>
<dbReference type="FunFam" id="3.20.20.70:FF:000006">
    <property type="entry name" value="Imidazole glycerol phosphate synthase subunit HisF"/>
    <property type="match status" value="1"/>
</dbReference>
<dbReference type="Gene3D" id="3.20.20.70">
    <property type="entry name" value="Aldolase class I"/>
    <property type="match status" value="1"/>
</dbReference>
<dbReference type="HAMAP" id="MF_01013">
    <property type="entry name" value="HisF"/>
    <property type="match status" value="1"/>
</dbReference>
<dbReference type="InterPro" id="IPR013785">
    <property type="entry name" value="Aldolase_TIM"/>
</dbReference>
<dbReference type="InterPro" id="IPR006062">
    <property type="entry name" value="His_biosynth"/>
</dbReference>
<dbReference type="InterPro" id="IPR004651">
    <property type="entry name" value="HisF"/>
</dbReference>
<dbReference type="InterPro" id="IPR050064">
    <property type="entry name" value="IGPS_HisA/HisF"/>
</dbReference>
<dbReference type="InterPro" id="IPR011060">
    <property type="entry name" value="RibuloseP-bd_barrel"/>
</dbReference>
<dbReference type="NCBIfam" id="TIGR00735">
    <property type="entry name" value="hisF"/>
    <property type="match status" value="1"/>
</dbReference>
<dbReference type="PANTHER" id="PTHR21235:SF2">
    <property type="entry name" value="IMIDAZOLE GLYCEROL PHOSPHATE SYNTHASE HISHF"/>
    <property type="match status" value="1"/>
</dbReference>
<dbReference type="PANTHER" id="PTHR21235">
    <property type="entry name" value="IMIDAZOLE GLYCEROL PHOSPHATE SYNTHASE SUBUNIT HISF/H IGP SYNTHASE SUBUNIT HISF/H"/>
    <property type="match status" value="1"/>
</dbReference>
<dbReference type="Pfam" id="PF00977">
    <property type="entry name" value="His_biosynth"/>
    <property type="match status" value="1"/>
</dbReference>
<dbReference type="SUPFAM" id="SSF51366">
    <property type="entry name" value="Ribulose-phoshate binding barrel"/>
    <property type="match status" value="1"/>
</dbReference>
<organism>
    <name type="scientific">Chlorobium phaeobacteroides (strain BS1)</name>
    <dbReference type="NCBI Taxonomy" id="331678"/>
    <lineage>
        <taxon>Bacteria</taxon>
        <taxon>Pseudomonadati</taxon>
        <taxon>Chlorobiota</taxon>
        <taxon>Chlorobiia</taxon>
        <taxon>Chlorobiales</taxon>
        <taxon>Chlorobiaceae</taxon>
        <taxon>Chlorobium/Pelodictyon group</taxon>
        <taxon>Chlorobium</taxon>
    </lineage>
</organism>
<reference key="1">
    <citation type="submission" date="2008-06" db="EMBL/GenBank/DDBJ databases">
        <title>Complete sequence of Chlorobium phaeobacteroides BS1.</title>
        <authorList>
            <consortium name="US DOE Joint Genome Institute"/>
            <person name="Lucas S."/>
            <person name="Copeland A."/>
            <person name="Lapidus A."/>
            <person name="Glavina del Rio T."/>
            <person name="Dalin E."/>
            <person name="Tice H."/>
            <person name="Bruce D."/>
            <person name="Goodwin L."/>
            <person name="Pitluck S."/>
            <person name="Schmutz J."/>
            <person name="Larimer F."/>
            <person name="Land M."/>
            <person name="Hauser L."/>
            <person name="Kyrpides N."/>
            <person name="Ovchinnikova G."/>
            <person name="Li T."/>
            <person name="Liu Z."/>
            <person name="Zhao F."/>
            <person name="Overmann J."/>
            <person name="Bryant D.A."/>
            <person name="Richardson P."/>
        </authorList>
    </citation>
    <scope>NUCLEOTIDE SEQUENCE [LARGE SCALE GENOMIC DNA]</scope>
    <source>
        <strain>BS1</strain>
    </source>
</reference>
<feature type="chain" id="PRO_1000134980" description="Imidazole glycerol phosphate synthase subunit HisF">
    <location>
        <begin position="1"/>
        <end position="251"/>
    </location>
</feature>
<feature type="active site" evidence="1">
    <location>
        <position position="11"/>
    </location>
</feature>
<feature type="active site" evidence="1">
    <location>
        <position position="130"/>
    </location>
</feature>
<comment type="function">
    <text evidence="1">IGPS catalyzes the conversion of PRFAR and glutamine to IGP, AICAR and glutamate. The HisF subunit catalyzes the cyclization activity that produces IGP and AICAR from PRFAR using the ammonia provided by the HisH subunit.</text>
</comment>
<comment type="catalytic activity">
    <reaction evidence="1">
        <text>5-[(5-phospho-1-deoxy-D-ribulos-1-ylimino)methylamino]-1-(5-phospho-beta-D-ribosyl)imidazole-4-carboxamide + L-glutamine = D-erythro-1-(imidazol-4-yl)glycerol 3-phosphate + 5-amino-1-(5-phospho-beta-D-ribosyl)imidazole-4-carboxamide + L-glutamate + H(+)</text>
        <dbReference type="Rhea" id="RHEA:24793"/>
        <dbReference type="ChEBI" id="CHEBI:15378"/>
        <dbReference type="ChEBI" id="CHEBI:29985"/>
        <dbReference type="ChEBI" id="CHEBI:58278"/>
        <dbReference type="ChEBI" id="CHEBI:58359"/>
        <dbReference type="ChEBI" id="CHEBI:58475"/>
        <dbReference type="ChEBI" id="CHEBI:58525"/>
        <dbReference type="EC" id="4.3.2.10"/>
    </reaction>
</comment>
<comment type="pathway">
    <text evidence="1">Amino-acid biosynthesis; L-histidine biosynthesis; L-histidine from 5-phospho-alpha-D-ribose 1-diphosphate: step 5/9.</text>
</comment>
<comment type="subunit">
    <text evidence="1">Heterodimer of HisH and HisF.</text>
</comment>
<comment type="subcellular location">
    <subcellularLocation>
        <location evidence="1">Cytoplasm</location>
    </subcellularLocation>
</comment>
<comment type="similarity">
    <text evidence="1">Belongs to the HisA/HisF family.</text>
</comment>
<proteinExistence type="inferred from homology"/>
<name>HIS6_CHLPB</name>